<gene>
    <name type="primary">spop</name>
</gene>
<keyword id="KW-0539">Nucleus</keyword>
<keyword id="KW-1185">Reference proteome</keyword>
<keyword id="KW-0833">Ubl conjugation pathway</keyword>
<evidence type="ECO:0000250" key="1"/>
<evidence type="ECO:0000255" key="2">
    <source>
        <dbReference type="PROSITE-ProRule" id="PRU00037"/>
    </source>
</evidence>
<evidence type="ECO:0000255" key="3">
    <source>
        <dbReference type="PROSITE-ProRule" id="PRU00129"/>
    </source>
</evidence>
<evidence type="ECO:0000305" key="4"/>
<reference key="1">
    <citation type="submission" date="2003-11" db="EMBL/GenBank/DDBJ databases">
        <authorList>
            <consortium name="NIH - Xenopus Gene Collection (XGC) project"/>
        </authorList>
    </citation>
    <scope>NUCLEOTIDE SEQUENCE [LARGE SCALE MRNA]</scope>
    <source>
        <tissue>Embryo</tissue>
    </source>
</reference>
<sequence length="374" mass="42154">MSRVPSPPPPAEMSSGPVAESWCYTQIKVVKFSYMWTINNFSFCREEMGEVIKSSTFSSGANDKLKWCLRVNPKGLDEESKDYLSLYLLLVSCPKSEVRAKFKFSILNAKGEETKAMESQRAYRFVQGKDWGFKKFIRRDFLLDEANGLLPDDKLTLFCEVSVVQDSVNISGQNTMNMVKVPECRLADELGGLWENSRFTDCCLCVAGQEFQAHKAILAARSPVFSAMFEHEMEESKKNRVEIKDVEPDVFKEMMCFIYTGKASNLDKMADDLLAAADKYALERLKVMCEEALCSNLSVENAAEILILADLHSADQLKTQAVDFINYHASDVMETSGWKSMVVSHPHLVAEAYRSLASAQCPFLGPPRKRLKQS</sequence>
<name>SPOP_XENTR</name>
<proteinExistence type="evidence at transcript level"/>
<dbReference type="EMBL" id="BC061316">
    <property type="protein sequence ID" value="AAH61316.1"/>
    <property type="molecule type" value="mRNA"/>
</dbReference>
<dbReference type="RefSeq" id="NP_989003.1">
    <property type="nucleotide sequence ID" value="NM_203672.1"/>
</dbReference>
<dbReference type="RefSeq" id="XP_012827047.1">
    <property type="nucleotide sequence ID" value="XM_012971593.3"/>
</dbReference>
<dbReference type="RefSeq" id="XP_012827048.1">
    <property type="nucleotide sequence ID" value="XM_012971594.3"/>
</dbReference>
<dbReference type="RefSeq" id="XP_012827050.1">
    <property type="nucleotide sequence ID" value="XM_012971596.3"/>
</dbReference>
<dbReference type="RefSeq" id="XP_017953174.1">
    <property type="nucleotide sequence ID" value="XM_018097685.1"/>
</dbReference>
<dbReference type="SMR" id="Q6P8B3"/>
<dbReference type="FunCoup" id="Q6P8B3">
    <property type="interactions" value="2333"/>
</dbReference>
<dbReference type="STRING" id="8364.ENSXETP00000049654"/>
<dbReference type="PaxDb" id="8364-ENSXETP00000057841"/>
<dbReference type="DNASU" id="394599"/>
<dbReference type="GeneID" id="394599"/>
<dbReference type="KEGG" id="xtr:394599"/>
<dbReference type="AGR" id="Xenbase:XB-GENE-1003310"/>
<dbReference type="CTD" id="8405"/>
<dbReference type="Xenbase" id="XB-GENE-1003310">
    <property type="gene designation" value="spop"/>
</dbReference>
<dbReference type="eggNOG" id="KOG1987">
    <property type="taxonomic scope" value="Eukaryota"/>
</dbReference>
<dbReference type="HOGENOM" id="CLU_004253_2_0_1"/>
<dbReference type="InParanoid" id="Q6P8B3"/>
<dbReference type="OMA" id="IKFNYMW"/>
<dbReference type="OrthoDB" id="6359816at2759"/>
<dbReference type="PhylomeDB" id="Q6P8B3"/>
<dbReference type="Reactome" id="R-XTR-5632684">
    <property type="pathway name" value="Hedgehog 'on' state"/>
</dbReference>
<dbReference type="UniPathway" id="UPA00143"/>
<dbReference type="Proteomes" id="UP000008143">
    <property type="component" value="Chromosome 10"/>
</dbReference>
<dbReference type="Bgee" id="ENSXETG00000027799">
    <property type="expression patterns" value="Expressed in skeletal muscle tissue and 13 other cell types or tissues"/>
</dbReference>
<dbReference type="GO" id="GO:0031463">
    <property type="term" value="C:Cul3-RING ubiquitin ligase complex"/>
    <property type="evidence" value="ECO:0000250"/>
    <property type="project" value="UniProtKB"/>
</dbReference>
<dbReference type="GO" id="GO:0016607">
    <property type="term" value="C:nuclear speck"/>
    <property type="evidence" value="ECO:0007669"/>
    <property type="project" value="UniProtKB-SubCell"/>
</dbReference>
<dbReference type="GO" id="GO:0005634">
    <property type="term" value="C:nucleus"/>
    <property type="evidence" value="ECO:0000250"/>
    <property type="project" value="UniProtKB"/>
</dbReference>
<dbReference type="GO" id="GO:0043161">
    <property type="term" value="P:proteasome-mediated ubiquitin-dependent protein catabolic process"/>
    <property type="evidence" value="ECO:0000250"/>
    <property type="project" value="UniProtKB"/>
</dbReference>
<dbReference type="GO" id="GO:0016567">
    <property type="term" value="P:protein ubiquitination"/>
    <property type="evidence" value="ECO:0007669"/>
    <property type="project" value="UniProtKB-UniPathway"/>
</dbReference>
<dbReference type="CDD" id="cd18518">
    <property type="entry name" value="BACK_SPOP"/>
    <property type="match status" value="1"/>
</dbReference>
<dbReference type="CDD" id="cd18279">
    <property type="entry name" value="BTB_POZ_SPOP-like"/>
    <property type="match status" value="1"/>
</dbReference>
<dbReference type="CDD" id="cd03774">
    <property type="entry name" value="MATH_SPOP"/>
    <property type="match status" value="1"/>
</dbReference>
<dbReference type="FunFam" id="2.60.210.10:FF:000028">
    <property type="entry name" value="Speckle-type POZ protein-like"/>
    <property type="match status" value="1"/>
</dbReference>
<dbReference type="FunFam" id="3.30.710.10:FF:000008">
    <property type="entry name" value="Speckle-type POZ protein-like a"/>
    <property type="match status" value="1"/>
</dbReference>
<dbReference type="Gene3D" id="6.10.250.3030">
    <property type="match status" value="1"/>
</dbReference>
<dbReference type="Gene3D" id="6.20.250.50">
    <property type="match status" value="1"/>
</dbReference>
<dbReference type="Gene3D" id="2.60.210.10">
    <property type="entry name" value="Apoptosis, Tumor Necrosis Factor Receptor Associated Protein 2, Chain A"/>
    <property type="match status" value="1"/>
</dbReference>
<dbReference type="Gene3D" id="3.30.710.10">
    <property type="entry name" value="Potassium Channel Kv1.1, Chain A"/>
    <property type="match status" value="1"/>
</dbReference>
<dbReference type="InterPro" id="IPR056423">
    <property type="entry name" value="BACK_BPM_SPOP"/>
</dbReference>
<dbReference type="InterPro" id="IPR000210">
    <property type="entry name" value="BTB/POZ_dom"/>
</dbReference>
<dbReference type="InterPro" id="IPR002083">
    <property type="entry name" value="MATH/TRAF_dom"/>
</dbReference>
<dbReference type="InterPro" id="IPR011333">
    <property type="entry name" value="SKP1/BTB/POZ_sf"/>
</dbReference>
<dbReference type="InterPro" id="IPR034089">
    <property type="entry name" value="SPOP_C"/>
</dbReference>
<dbReference type="InterPro" id="IPR008974">
    <property type="entry name" value="TRAF-like"/>
</dbReference>
<dbReference type="PANTHER" id="PTHR24413">
    <property type="entry name" value="SPECKLE-TYPE POZ PROTEIN"/>
    <property type="match status" value="1"/>
</dbReference>
<dbReference type="Pfam" id="PF24570">
    <property type="entry name" value="BACK_BPM_SPOP"/>
    <property type="match status" value="1"/>
</dbReference>
<dbReference type="Pfam" id="PF00651">
    <property type="entry name" value="BTB"/>
    <property type="match status" value="1"/>
</dbReference>
<dbReference type="Pfam" id="PF22486">
    <property type="entry name" value="MATH_2"/>
    <property type="match status" value="1"/>
</dbReference>
<dbReference type="SMART" id="SM00225">
    <property type="entry name" value="BTB"/>
    <property type="match status" value="1"/>
</dbReference>
<dbReference type="SMART" id="SM00061">
    <property type="entry name" value="MATH"/>
    <property type="match status" value="1"/>
</dbReference>
<dbReference type="SUPFAM" id="SSF54695">
    <property type="entry name" value="POZ domain"/>
    <property type="match status" value="1"/>
</dbReference>
<dbReference type="SUPFAM" id="SSF49599">
    <property type="entry name" value="TRAF domain-like"/>
    <property type="match status" value="1"/>
</dbReference>
<dbReference type="PROSITE" id="PS50097">
    <property type="entry name" value="BTB"/>
    <property type="match status" value="1"/>
</dbReference>
<dbReference type="PROSITE" id="PS50144">
    <property type="entry name" value="MATH"/>
    <property type="match status" value="1"/>
</dbReference>
<comment type="function">
    <text evidence="1">Component of a cullin-RING-based BCR (BTB-CUL3-RBX1) E3 ubiquitin-protein ligase complex that mediates the ubiquitination of target proteins, leading most often to their proteasomal degradation.</text>
</comment>
<comment type="pathway">
    <text>Protein modification; protein ubiquitination.</text>
</comment>
<comment type="subunit">
    <text evidence="1">Homodimer. Part of cullin-RING-based BCR (BTB-CUL3-RBX1) E3 ubiquitin-protein ligase complexes that contain CUL3 and SPOP, plus a target protein (By similarity).</text>
</comment>
<comment type="subcellular location">
    <subcellularLocation>
        <location evidence="1">Nucleus</location>
    </subcellularLocation>
    <subcellularLocation>
        <location evidence="1">Nucleus speckle</location>
    </subcellularLocation>
</comment>
<comment type="domain">
    <text evidence="1">The BTB (POZ) domain mediates dimerization and interaction with CUL3.</text>
</comment>
<comment type="domain">
    <text evidence="1">The MATH domain mediates interaction with protein-ubiquitin ligase substrates.</text>
</comment>
<comment type="similarity">
    <text evidence="4">Belongs to the Tdpoz family.</text>
</comment>
<feature type="chain" id="PRO_0000274587" description="Speckle-type POZ protein">
    <location>
        <begin position="1"/>
        <end position="374"/>
    </location>
</feature>
<feature type="domain" description="MATH" evidence="3">
    <location>
        <begin position="31"/>
        <end position="161"/>
    </location>
</feature>
<feature type="domain" description="BTB" evidence="2">
    <location>
        <begin position="173"/>
        <end position="297"/>
    </location>
</feature>
<feature type="region of interest" description="Required for nuclear localization" evidence="1">
    <location>
        <begin position="71"/>
        <end position="191"/>
    </location>
</feature>
<feature type="region of interest" description="Homodimerization" evidence="1">
    <location>
        <begin position="297"/>
        <end position="355"/>
    </location>
</feature>
<accession>Q6P8B3</accession>
<protein>
    <recommendedName>
        <fullName>Speckle-type POZ protein</fullName>
    </recommendedName>
</protein>
<organism>
    <name type="scientific">Xenopus tropicalis</name>
    <name type="common">Western clawed frog</name>
    <name type="synonym">Silurana tropicalis</name>
    <dbReference type="NCBI Taxonomy" id="8364"/>
    <lineage>
        <taxon>Eukaryota</taxon>
        <taxon>Metazoa</taxon>
        <taxon>Chordata</taxon>
        <taxon>Craniata</taxon>
        <taxon>Vertebrata</taxon>
        <taxon>Euteleostomi</taxon>
        <taxon>Amphibia</taxon>
        <taxon>Batrachia</taxon>
        <taxon>Anura</taxon>
        <taxon>Pipoidea</taxon>
        <taxon>Pipidae</taxon>
        <taxon>Xenopodinae</taxon>
        <taxon>Xenopus</taxon>
        <taxon>Silurana</taxon>
    </lineage>
</organism>